<accession>B4QQE2</accession>
<sequence>MAFPTTSAQQAETNRKILEEIQTKKQLLAGGIINLGLSPPNQMPAPQLLGQPTTVNPDFQAGVGIATNATSTARSAFNPTSSTTLGFFIPQDSYFGNSFIPVLPRLEPLPSPATTPTTPNAPPSHSISK</sequence>
<name>SOSSC_DROSI</name>
<evidence type="ECO:0000256" key="1">
    <source>
        <dbReference type="SAM" id="MobiDB-lite"/>
    </source>
</evidence>
<evidence type="ECO:0000305" key="2"/>
<feature type="chain" id="PRO_0000385327" description="SOSS complex subunit C homolog">
    <location>
        <begin position="1"/>
        <end position="129"/>
    </location>
</feature>
<feature type="region of interest" description="Disordered" evidence="1">
    <location>
        <begin position="105"/>
        <end position="129"/>
    </location>
</feature>
<protein>
    <recommendedName>
        <fullName>SOSS complex subunit C homolog</fullName>
    </recommendedName>
</protein>
<gene>
    <name type="ORF">GD14793</name>
</gene>
<dbReference type="EMBL" id="CM000363">
    <property type="protein sequence ID" value="EDX11048.1"/>
    <property type="molecule type" value="Genomic_DNA"/>
</dbReference>
<dbReference type="SMR" id="B4QQE2"/>
<dbReference type="STRING" id="7240.B4QQE2"/>
<dbReference type="EnsemblMetazoa" id="FBtr0214703">
    <property type="protein sequence ID" value="FBpp0213195"/>
    <property type="gene ID" value="FBgn0186466"/>
</dbReference>
<dbReference type="EnsemblMetazoa" id="XM_002085427.4">
    <property type="protein sequence ID" value="XP_002085463.1"/>
    <property type="gene ID" value="LOC6738661"/>
</dbReference>
<dbReference type="GeneID" id="6738661"/>
<dbReference type="HOGENOM" id="CLU_145773_0_0_1"/>
<dbReference type="OMA" id="VMETQHM"/>
<dbReference type="OrthoDB" id="419617at2759"/>
<dbReference type="PhylomeDB" id="B4QQE2"/>
<dbReference type="Proteomes" id="UP000000304">
    <property type="component" value="Chromosome 3L"/>
</dbReference>
<dbReference type="Bgee" id="FBgn0186466">
    <property type="expression patterns" value="Expressed in embryo and 2 other cell types or tissues"/>
</dbReference>
<dbReference type="GO" id="GO:0005654">
    <property type="term" value="C:nucleoplasm"/>
    <property type="evidence" value="ECO:0007669"/>
    <property type="project" value="TreeGrafter"/>
</dbReference>
<dbReference type="GO" id="GO:0070876">
    <property type="term" value="C:SOSS complex"/>
    <property type="evidence" value="ECO:0007669"/>
    <property type="project" value="InterPro"/>
</dbReference>
<dbReference type="GO" id="GO:0006281">
    <property type="term" value="P:DNA repair"/>
    <property type="evidence" value="ECO:0007669"/>
    <property type="project" value="InterPro"/>
</dbReference>
<dbReference type="InterPro" id="IPR031821">
    <property type="entry name" value="SOSSC"/>
</dbReference>
<dbReference type="PANTHER" id="PTHR31526">
    <property type="entry name" value="SOSS COMPLEX SUBUNIT C"/>
    <property type="match status" value="1"/>
</dbReference>
<dbReference type="PANTHER" id="PTHR31526:SF2">
    <property type="entry name" value="SOSS COMPLEX SUBUNIT C"/>
    <property type="match status" value="1"/>
</dbReference>
<dbReference type="Pfam" id="PF15925">
    <property type="entry name" value="SOSSC"/>
    <property type="match status" value="1"/>
</dbReference>
<proteinExistence type="inferred from homology"/>
<reference key="1">
    <citation type="journal article" date="2007" name="Nature">
        <title>Evolution of genes and genomes on the Drosophila phylogeny.</title>
        <authorList>
            <consortium name="Drosophila 12 genomes consortium"/>
        </authorList>
    </citation>
    <scope>NUCLEOTIDE SEQUENCE [LARGE SCALE GENOMIC DNA]</scope>
</reference>
<keyword id="KW-1185">Reference proteome</keyword>
<organism>
    <name type="scientific">Drosophila simulans</name>
    <name type="common">Fruit fly</name>
    <dbReference type="NCBI Taxonomy" id="7240"/>
    <lineage>
        <taxon>Eukaryota</taxon>
        <taxon>Metazoa</taxon>
        <taxon>Ecdysozoa</taxon>
        <taxon>Arthropoda</taxon>
        <taxon>Hexapoda</taxon>
        <taxon>Insecta</taxon>
        <taxon>Pterygota</taxon>
        <taxon>Neoptera</taxon>
        <taxon>Endopterygota</taxon>
        <taxon>Diptera</taxon>
        <taxon>Brachycera</taxon>
        <taxon>Muscomorpha</taxon>
        <taxon>Ephydroidea</taxon>
        <taxon>Drosophilidae</taxon>
        <taxon>Drosophila</taxon>
        <taxon>Sophophora</taxon>
    </lineage>
</organism>
<comment type="similarity">
    <text evidence="2">Belongs to the SOSS-C family.</text>
</comment>